<dbReference type="EC" id="2.1.1.-" evidence="1"/>
<dbReference type="EC" id="2.1.1.35" evidence="1"/>
<dbReference type="EMBL" id="CP000863">
    <property type="protein sequence ID" value="ACC56884.1"/>
    <property type="molecule type" value="Genomic_DNA"/>
</dbReference>
<dbReference type="RefSeq" id="WP_000204640.1">
    <property type="nucleotide sequence ID" value="NZ_CP031380.1"/>
</dbReference>
<dbReference type="SMR" id="B2HYZ7"/>
<dbReference type="KEGG" id="abc:ACICU_01572"/>
<dbReference type="HOGENOM" id="CLU_043022_0_0_6"/>
<dbReference type="Proteomes" id="UP000008839">
    <property type="component" value="Chromosome"/>
</dbReference>
<dbReference type="GO" id="GO:0005829">
    <property type="term" value="C:cytosol"/>
    <property type="evidence" value="ECO:0007669"/>
    <property type="project" value="TreeGrafter"/>
</dbReference>
<dbReference type="GO" id="GO:0019843">
    <property type="term" value="F:rRNA binding"/>
    <property type="evidence" value="ECO:0007669"/>
    <property type="project" value="TreeGrafter"/>
</dbReference>
<dbReference type="GO" id="GO:0030697">
    <property type="term" value="F:tRNA (uracil(54)-C5)-methyltransferase activity, S-adenosyl methionine-dependent"/>
    <property type="evidence" value="ECO:0007669"/>
    <property type="project" value="UniProtKB-UniRule"/>
</dbReference>
<dbReference type="GO" id="GO:0000049">
    <property type="term" value="F:tRNA binding"/>
    <property type="evidence" value="ECO:0007669"/>
    <property type="project" value="TreeGrafter"/>
</dbReference>
<dbReference type="GO" id="GO:0030488">
    <property type="term" value="P:tRNA methylation"/>
    <property type="evidence" value="ECO:0007669"/>
    <property type="project" value="UniProtKB-UniRule"/>
</dbReference>
<dbReference type="CDD" id="cd02440">
    <property type="entry name" value="AdoMet_MTases"/>
    <property type="match status" value="1"/>
</dbReference>
<dbReference type="FunFam" id="2.40.50.1070:FF:000001">
    <property type="entry name" value="tRNA/tmRNA (uracil-C(5))-methyltransferase"/>
    <property type="match status" value="1"/>
</dbReference>
<dbReference type="FunFam" id="3.40.50.150:FF:000012">
    <property type="entry name" value="tRNA/tmRNA (uracil-C(5))-methyltransferase"/>
    <property type="match status" value="1"/>
</dbReference>
<dbReference type="Gene3D" id="2.40.50.1070">
    <property type="match status" value="1"/>
</dbReference>
<dbReference type="Gene3D" id="3.40.50.150">
    <property type="entry name" value="Vaccinia Virus protein VP39"/>
    <property type="match status" value="1"/>
</dbReference>
<dbReference type="HAMAP" id="MF_01011">
    <property type="entry name" value="RNA_methyltr_TrmA"/>
    <property type="match status" value="1"/>
</dbReference>
<dbReference type="InterPro" id="IPR030390">
    <property type="entry name" value="MeTrfase_TrmA_AS"/>
</dbReference>
<dbReference type="InterPro" id="IPR030391">
    <property type="entry name" value="MeTrfase_TrmA_CS"/>
</dbReference>
<dbReference type="InterPro" id="IPR029063">
    <property type="entry name" value="SAM-dependent_MTases_sf"/>
</dbReference>
<dbReference type="InterPro" id="IPR011869">
    <property type="entry name" value="TrmA_MeTrfase"/>
</dbReference>
<dbReference type="InterPro" id="IPR010280">
    <property type="entry name" value="U5_MeTrfase_fam"/>
</dbReference>
<dbReference type="NCBIfam" id="TIGR02143">
    <property type="entry name" value="trmA_only"/>
    <property type="match status" value="1"/>
</dbReference>
<dbReference type="PANTHER" id="PTHR47790">
    <property type="entry name" value="TRNA/TMRNA (URACIL-C(5))-METHYLTRANSFERASE"/>
    <property type="match status" value="1"/>
</dbReference>
<dbReference type="PANTHER" id="PTHR47790:SF2">
    <property type="entry name" value="TRNA_TMRNA (URACIL-C(5))-METHYLTRANSFERASE"/>
    <property type="match status" value="1"/>
</dbReference>
<dbReference type="Pfam" id="PF05958">
    <property type="entry name" value="tRNA_U5-meth_tr"/>
    <property type="match status" value="1"/>
</dbReference>
<dbReference type="SUPFAM" id="SSF53335">
    <property type="entry name" value="S-adenosyl-L-methionine-dependent methyltransferases"/>
    <property type="match status" value="1"/>
</dbReference>
<dbReference type="PROSITE" id="PS51687">
    <property type="entry name" value="SAM_MT_RNA_M5U"/>
    <property type="match status" value="1"/>
</dbReference>
<dbReference type="PROSITE" id="PS01230">
    <property type="entry name" value="TRMA_1"/>
    <property type="match status" value="1"/>
</dbReference>
<dbReference type="PROSITE" id="PS01231">
    <property type="entry name" value="TRMA_2"/>
    <property type="match status" value="1"/>
</dbReference>
<feature type="chain" id="PRO_0000388541" description="tRNA/tmRNA (uracil-C(5))-methyltransferase">
    <location>
        <begin position="1"/>
        <end position="361"/>
    </location>
</feature>
<feature type="active site" description="Nucleophile" evidence="1">
    <location>
        <position position="319"/>
    </location>
</feature>
<feature type="active site" description="Proton acceptor" evidence="1">
    <location>
        <position position="353"/>
    </location>
</feature>
<feature type="binding site" evidence="1">
    <location>
        <position position="183"/>
    </location>
    <ligand>
        <name>S-adenosyl-L-methionine</name>
        <dbReference type="ChEBI" id="CHEBI:59789"/>
    </ligand>
</feature>
<feature type="binding site" evidence="1">
    <location>
        <position position="211"/>
    </location>
    <ligand>
        <name>S-adenosyl-L-methionine</name>
        <dbReference type="ChEBI" id="CHEBI:59789"/>
    </ligand>
</feature>
<feature type="binding site" evidence="1">
    <location>
        <position position="216"/>
    </location>
    <ligand>
        <name>S-adenosyl-L-methionine</name>
        <dbReference type="ChEBI" id="CHEBI:59789"/>
    </ligand>
</feature>
<feature type="binding site" evidence="1">
    <location>
        <position position="232"/>
    </location>
    <ligand>
        <name>S-adenosyl-L-methionine</name>
        <dbReference type="ChEBI" id="CHEBI:59789"/>
    </ligand>
</feature>
<feature type="binding site" evidence="1">
    <location>
        <position position="294"/>
    </location>
    <ligand>
        <name>S-adenosyl-L-methionine</name>
        <dbReference type="ChEBI" id="CHEBI:59789"/>
    </ligand>
</feature>
<evidence type="ECO:0000255" key="1">
    <source>
        <dbReference type="HAMAP-Rule" id="MF_01011"/>
    </source>
</evidence>
<keyword id="KW-0489">Methyltransferase</keyword>
<keyword id="KW-0949">S-adenosyl-L-methionine</keyword>
<keyword id="KW-0808">Transferase</keyword>
<keyword id="KW-0819">tRNA processing</keyword>
<organism>
    <name type="scientific">Acinetobacter baumannii (strain ACICU)</name>
    <dbReference type="NCBI Taxonomy" id="405416"/>
    <lineage>
        <taxon>Bacteria</taxon>
        <taxon>Pseudomonadati</taxon>
        <taxon>Pseudomonadota</taxon>
        <taxon>Gammaproteobacteria</taxon>
        <taxon>Moraxellales</taxon>
        <taxon>Moraxellaceae</taxon>
        <taxon>Acinetobacter</taxon>
        <taxon>Acinetobacter calcoaceticus/baumannii complex</taxon>
    </lineage>
</organism>
<name>TRMA_ACIBC</name>
<comment type="function">
    <text evidence="1">Dual-specificity methyltransferase that catalyzes the formation of 5-methyluridine at position 54 (m5U54) in all tRNAs, and that of position 341 (m5U341) in tmRNA (transfer-mRNA).</text>
</comment>
<comment type="catalytic activity">
    <reaction evidence="1">
        <text>uridine(54) in tRNA + S-adenosyl-L-methionine = 5-methyluridine(54) in tRNA + S-adenosyl-L-homocysteine + H(+)</text>
        <dbReference type="Rhea" id="RHEA:42712"/>
        <dbReference type="Rhea" id="RHEA-COMP:10167"/>
        <dbReference type="Rhea" id="RHEA-COMP:10193"/>
        <dbReference type="ChEBI" id="CHEBI:15378"/>
        <dbReference type="ChEBI" id="CHEBI:57856"/>
        <dbReference type="ChEBI" id="CHEBI:59789"/>
        <dbReference type="ChEBI" id="CHEBI:65315"/>
        <dbReference type="ChEBI" id="CHEBI:74447"/>
        <dbReference type="EC" id="2.1.1.35"/>
    </reaction>
</comment>
<comment type="catalytic activity">
    <reaction evidence="1">
        <text>uridine(341) in tmRNA + S-adenosyl-L-methionine = 5-methyluridine(341) in tmRNA + S-adenosyl-L-homocysteine + H(+)</text>
        <dbReference type="Rhea" id="RHEA:43612"/>
        <dbReference type="Rhea" id="RHEA-COMP:10630"/>
        <dbReference type="Rhea" id="RHEA-COMP:10631"/>
        <dbReference type="ChEBI" id="CHEBI:15378"/>
        <dbReference type="ChEBI" id="CHEBI:57856"/>
        <dbReference type="ChEBI" id="CHEBI:59789"/>
        <dbReference type="ChEBI" id="CHEBI:65315"/>
        <dbReference type="ChEBI" id="CHEBI:74447"/>
    </reaction>
</comment>
<comment type="similarity">
    <text evidence="1">Belongs to the class I-like SAM-binding methyltransferase superfamily. RNA M5U methyltransferase family. TrmA subfamily.</text>
</comment>
<proteinExistence type="inferred from homology"/>
<reference key="1">
    <citation type="journal article" date="2008" name="Antimicrob. Agents Chemother.">
        <title>Whole-genome pyrosequencing of an epidemic multidrug-resistant Acinetobacter baumannii strain belonging to the European clone II group.</title>
        <authorList>
            <person name="Iacono M."/>
            <person name="Villa L."/>
            <person name="Fortini D."/>
            <person name="Bordoni R."/>
            <person name="Imperi F."/>
            <person name="Bonnal R.J."/>
            <person name="Sicheritz-Ponten T."/>
            <person name="De Bellis G."/>
            <person name="Visca P."/>
            <person name="Cassone A."/>
            <person name="Carattoli A."/>
        </authorList>
    </citation>
    <scope>NUCLEOTIDE SEQUENCE [LARGE SCALE GENOMIC DNA]</scope>
    <source>
        <strain>ACICU</strain>
    </source>
</reference>
<sequence>MTSSYHQQLQAKIDRITTQFSEFTPPTLEVFESPEQHFRMRAEFRIWHTENDMFYAMFERNDDGKQKTVVRIDEFPIADKSINDLMPLLLAELKANSLLSQRLFEVDFLATLSGEMLVTLIYHRKLNQEWEQEAKALAEKLNIKIMGRSRGQKIVIGDDFVVEEFELLNRSFKYKQIESSFTQPNAQVCKKMLQWACDAAEGSKKHLLELYCGNGNFTLPLSLKFERVLATELAKSSVYAAQWNIEQNQIDNIQVARLSAEEFTQAYQGEREFRRLQEADIDIQSYDFDTVFVDPPRAGIDDETLKLLQSFERIIYISCNPNTLYENLKTLTQTHRVTKFALFDQFPYTHHVESGVLLEKI</sequence>
<accession>B2HYZ7</accession>
<gene>
    <name evidence="1" type="primary">trmA</name>
    <name type="ordered locus">ACICU_01572</name>
</gene>
<protein>
    <recommendedName>
        <fullName evidence="1">tRNA/tmRNA (uracil-C(5))-methyltransferase</fullName>
        <ecNumber evidence="1">2.1.1.-</ecNumber>
        <ecNumber evidence="1">2.1.1.35</ecNumber>
    </recommendedName>
    <alternativeName>
        <fullName evidence="1">tRNA (uracil(54)-C(5))-methyltransferase</fullName>
    </alternativeName>
    <alternativeName>
        <fullName evidence="1">tRNA(m5U54)-methyltransferase</fullName>
        <shortName evidence="1">RUMT</shortName>
    </alternativeName>
    <alternativeName>
        <fullName evidence="1">tmRNA (uracil(341)-C(5))-methyltransferase</fullName>
    </alternativeName>
</protein>